<dbReference type="EMBL" id="CP000087">
    <property type="protein sequence ID" value="ABE04957.1"/>
    <property type="molecule type" value="Genomic_DNA"/>
</dbReference>
<dbReference type="RefSeq" id="WP_011477542.1">
    <property type="nucleotide sequence ID" value="NC_007940.1"/>
</dbReference>
<dbReference type="SMR" id="Q1RI57"/>
<dbReference type="KEGG" id="rbe:RBE_0876"/>
<dbReference type="eggNOG" id="COG3022">
    <property type="taxonomic scope" value="Bacteria"/>
</dbReference>
<dbReference type="HOGENOM" id="CLU_061989_0_0_5"/>
<dbReference type="OrthoDB" id="9777133at2"/>
<dbReference type="Proteomes" id="UP000001951">
    <property type="component" value="Chromosome"/>
</dbReference>
<dbReference type="GO" id="GO:0005829">
    <property type="term" value="C:cytosol"/>
    <property type="evidence" value="ECO:0007669"/>
    <property type="project" value="TreeGrafter"/>
</dbReference>
<dbReference type="GO" id="GO:0033194">
    <property type="term" value="P:response to hydroperoxide"/>
    <property type="evidence" value="ECO:0007669"/>
    <property type="project" value="TreeGrafter"/>
</dbReference>
<dbReference type="HAMAP" id="MF_00652">
    <property type="entry name" value="UPF0246"/>
    <property type="match status" value="1"/>
</dbReference>
<dbReference type="InterPro" id="IPR005583">
    <property type="entry name" value="YaaA"/>
</dbReference>
<dbReference type="PANTHER" id="PTHR30283:SF4">
    <property type="entry name" value="PEROXIDE STRESS RESISTANCE PROTEIN YAAA"/>
    <property type="match status" value="1"/>
</dbReference>
<dbReference type="PANTHER" id="PTHR30283">
    <property type="entry name" value="PEROXIDE STRESS RESPONSE PROTEIN YAAA"/>
    <property type="match status" value="1"/>
</dbReference>
<dbReference type="Pfam" id="PF03883">
    <property type="entry name" value="H2O2_YaaD"/>
    <property type="match status" value="1"/>
</dbReference>
<feature type="chain" id="PRO_0000262050" description="UPF0246 protein RBE_0876">
    <location>
        <begin position="1"/>
        <end position="248"/>
    </location>
</feature>
<protein>
    <recommendedName>
        <fullName evidence="1">UPF0246 protein RBE_0876</fullName>
    </recommendedName>
</protein>
<reference key="1">
    <citation type="journal article" date="2006" name="PLoS Genet.">
        <title>Genome sequence of Rickettsia bellii illuminates the role of amoebae in gene exchanges between intracellular pathogens.</title>
        <authorList>
            <person name="Ogata H."/>
            <person name="La Scola B."/>
            <person name="Audic S."/>
            <person name="Renesto P."/>
            <person name="Blanc G."/>
            <person name="Robert C."/>
            <person name="Fournier P.-E."/>
            <person name="Claverie J.-M."/>
            <person name="Raoult D."/>
        </authorList>
    </citation>
    <scope>NUCLEOTIDE SEQUENCE [LARGE SCALE GENOMIC DNA]</scope>
    <source>
        <strain>RML369-C</strain>
    </source>
</reference>
<sequence length="248" mass="28279">MLTIISSAKTLNFELIAFKGELTSPAFPKITNQLLAIVKNYSEVQLSKTMDISEKLAHLNKERFQNFEKQDSKAAIFAYAGDVFNNIQSKNLSEDAVNFLQSHLLIISGLYGALKPLDAIKPYRLEMAAKLNEINDLSKFWQDEITNYINHTLEHHKHKYLLNLASQEYSSVLNQDKLKYPIINIHFKENRNGKLATIGINAKKARGNMVNFIANNLIDSPDLLKEFSYLGYKYSSKDSLNNDLVFVK</sequence>
<organism>
    <name type="scientific">Rickettsia bellii (strain RML369-C)</name>
    <dbReference type="NCBI Taxonomy" id="336407"/>
    <lineage>
        <taxon>Bacteria</taxon>
        <taxon>Pseudomonadati</taxon>
        <taxon>Pseudomonadota</taxon>
        <taxon>Alphaproteobacteria</taxon>
        <taxon>Rickettsiales</taxon>
        <taxon>Rickettsiaceae</taxon>
        <taxon>Rickettsieae</taxon>
        <taxon>Rickettsia</taxon>
        <taxon>belli group</taxon>
    </lineage>
</organism>
<gene>
    <name type="ordered locus">RBE_0876</name>
</gene>
<name>Y876_RICBR</name>
<comment type="similarity">
    <text evidence="1">Belongs to the UPF0246 family.</text>
</comment>
<proteinExistence type="inferred from homology"/>
<evidence type="ECO:0000255" key="1">
    <source>
        <dbReference type="HAMAP-Rule" id="MF_00652"/>
    </source>
</evidence>
<accession>Q1RI57</accession>